<protein>
    <recommendedName>
        <fullName>Retinoic acid receptor RXR-gamma</fullName>
    </recommendedName>
    <alternativeName>
        <fullName>Nuclear receptor subfamily 2 group B member 3</fullName>
    </alternativeName>
    <alternativeName>
        <fullName>Retinoid X receptor gamma</fullName>
    </alternativeName>
</protein>
<accession>P51129</accession>
<reference key="1">
    <citation type="journal article" date="1992" name="Proc. Natl. Acad. Sci. U.S.A.">
        <title>Multiple retinoid-responsive receptors in a single cell: families of retinoid 'X' receptors and retinoic acid receptors in the Xenopus egg.</title>
        <authorList>
            <person name="Blumberg B."/>
            <person name="Mangelsdorf D.J."/>
            <person name="Dyck J.A."/>
            <person name="Bittner D.A."/>
            <person name="Evans R.M."/>
            <person name="De Robertis E.M."/>
        </authorList>
    </citation>
    <scope>NUCLEOTIDE SEQUENCE [MRNA]</scope>
</reference>
<keyword id="KW-0238">DNA-binding</keyword>
<keyword id="KW-0479">Metal-binding</keyword>
<keyword id="KW-0539">Nucleus</keyword>
<keyword id="KW-0675">Receptor</keyword>
<keyword id="KW-1185">Reference proteome</keyword>
<keyword id="KW-0804">Transcription</keyword>
<keyword id="KW-0805">Transcription regulation</keyword>
<keyword id="KW-0862">Zinc</keyword>
<keyword id="KW-0863">Zinc-finger</keyword>
<evidence type="ECO:0000250" key="1"/>
<evidence type="ECO:0000255" key="2">
    <source>
        <dbReference type="PROSITE-ProRule" id="PRU00407"/>
    </source>
</evidence>
<evidence type="ECO:0000255" key="3">
    <source>
        <dbReference type="PROSITE-ProRule" id="PRU01189"/>
    </source>
</evidence>
<evidence type="ECO:0000256" key="4">
    <source>
        <dbReference type="SAM" id="MobiDB-lite"/>
    </source>
</evidence>
<evidence type="ECO:0000305" key="5"/>
<organism>
    <name type="scientific">Xenopus laevis</name>
    <name type="common">African clawed frog</name>
    <dbReference type="NCBI Taxonomy" id="8355"/>
    <lineage>
        <taxon>Eukaryota</taxon>
        <taxon>Metazoa</taxon>
        <taxon>Chordata</taxon>
        <taxon>Craniata</taxon>
        <taxon>Vertebrata</taxon>
        <taxon>Euteleostomi</taxon>
        <taxon>Amphibia</taxon>
        <taxon>Batrachia</taxon>
        <taxon>Anura</taxon>
        <taxon>Pipoidea</taxon>
        <taxon>Pipidae</taxon>
        <taxon>Xenopodinae</taxon>
        <taxon>Xenopus</taxon>
        <taxon>Xenopus</taxon>
    </lineage>
</organism>
<dbReference type="EMBL" id="L11443">
    <property type="status" value="NOT_ANNOTATED_CDS"/>
    <property type="molecule type" value="mRNA"/>
</dbReference>
<dbReference type="PIR" id="D41977">
    <property type="entry name" value="D41977"/>
</dbReference>
<dbReference type="SMR" id="P51129"/>
<dbReference type="AGR" id="Xenbase:XB-GENE-865184"/>
<dbReference type="Xenbase" id="XB-GENE-865184">
    <property type="gene designation" value="rxrg.L"/>
</dbReference>
<dbReference type="Proteomes" id="UP000186698">
    <property type="component" value="Unplaced"/>
</dbReference>
<dbReference type="GO" id="GO:0090575">
    <property type="term" value="C:RNA polymerase II transcription regulator complex"/>
    <property type="evidence" value="ECO:0000318"/>
    <property type="project" value="GO_Central"/>
</dbReference>
<dbReference type="GO" id="GO:0004879">
    <property type="term" value="F:nuclear receptor activity"/>
    <property type="evidence" value="ECO:0000318"/>
    <property type="project" value="GO_Central"/>
</dbReference>
<dbReference type="GO" id="GO:0003707">
    <property type="term" value="F:nuclear steroid receptor activity"/>
    <property type="evidence" value="ECO:0007669"/>
    <property type="project" value="InterPro"/>
</dbReference>
<dbReference type="GO" id="GO:0046966">
    <property type="term" value="F:nuclear thyroid hormone receptor binding"/>
    <property type="evidence" value="ECO:0000353"/>
    <property type="project" value="UniProtKB"/>
</dbReference>
<dbReference type="GO" id="GO:0046982">
    <property type="term" value="F:protein heterodimerization activity"/>
    <property type="evidence" value="ECO:0000353"/>
    <property type="project" value="UniProtKB"/>
</dbReference>
<dbReference type="GO" id="GO:0044323">
    <property type="term" value="F:retinoic acid-responsive element binding"/>
    <property type="evidence" value="ECO:0000318"/>
    <property type="project" value="GO_Central"/>
</dbReference>
<dbReference type="GO" id="GO:0043565">
    <property type="term" value="F:sequence-specific DNA binding"/>
    <property type="evidence" value="ECO:0000353"/>
    <property type="project" value="UniProtKB"/>
</dbReference>
<dbReference type="GO" id="GO:0008270">
    <property type="term" value="F:zinc ion binding"/>
    <property type="evidence" value="ECO:0007669"/>
    <property type="project" value="UniProtKB-KW"/>
</dbReference>
<dbReference type="GO" id="GO:0030154">
    <property type="term" value="P:cell differentiation"/>
    <property type="evidence" value="ECO:0000318"/>
    <property type="project" value="GO_Central"/>
</dbReference>
<dbReference type="GO" id="GO:0007399">
    <property type="term" value="P:nervous system development"/>
    <property type="evidence" value="ECO:0000318"/>
    <property type="project" value="GO_Central"/>
</dbReference>
<dbReference type="GO" id="GO:0045944">
    <property type="term" value="P:positive regulation of transcription by RNA polymerase II"/>
    <property type="evidence" value="ECO:0000318"/>
    <property type="project" value="GO_Central"/>
</dbReference>
<dbReference type="GO" id="GO:0048384">
    <property type="term" value="P:retinoic acid receptor signaling pathway"/>
    <property type="evidence" value="ECO:0000318"/>
    <property type="project" value="GO_Central"/>
</dbReference>
<dbReference type="CDD" id="cd06956">
    <property type="entry name" value="NR_DBD_RXR"/>
    <property type="match status" value="1"/>
</dbReference>
<dbReference type="CDD" id="cd06943">
    <property type="entry name" value="NR_LBD_RXR_like"/>
    <property type="match status" value="1"/>
</dbReference>
<dbReference type="FunFam" id="1.10.565.10:FF:000002">
    <property type="entry name" value="Retinoic acid receptor RXR-alpha"/>
    <property type="match status" value="1"/>
</dbReference>
<dbReference type="FunFam" id="3.30.50.10:FF:000005">
    <property type="entry name" value="Retinoic acid receptor RXR-alpha"/>
    <property type="match status" value="1"/>
</dbReference>
<dbReference type="Gene3D" id="3.30.50.10">
    <property type="entry name" value="Erythroid Transcription Factor GATA-1, subunit A"/>
    <property type="match status" value="1"/>
</dbReference>
<dbReference type="Gene3D" id="1.10.565.10">
    <property type="entry name" value="Retinoid X Receptor"/>
    <property type="match status" value="1"/>
</dbReference>
<dbReference type="InterPro" id="IPR035500">
    <property type="entry name" value="NHR-like_dom_sf"/>
</dbReference>
<dbReference type="InterPro" id="IPR021780">
    <property type="entry name" value="Nuc_recep-AF1"/>
</dbReference>
<dbReference type="InterPro" id="IPR000536">
    <property type="entry name" value="Nucl_hrmn_rcpt_lig-bd"/>
</dbReference>
<dbReference type="InterPro" id="IPR050274">
    <property type="entry name" value="Nuclear_hormone_rcpt_NR2"/>
</dbReference>
<dbReference type="InterPro" id="IPR001723">
    <property type="entry name" value="Nuclear_hrmn_rcpt"/>
</dbReference>
<dbReference type="InterPro" id="IPR000003">
    <property type="entry name" value="Retinoid-X_rcpt/HNF4"/>
</dbReference>
<dbReference type="InterPro" id="IPR001628">
    <property type="entry name" value="Znf_hrmn_rcpt"/>
</dbReference>
<dbReference type="InterPro" id="IPR013088">
    <property type="entry name" value="Znf_NHR/GATA"/>
</dbReference>
<dbReference type="PANTHER" id="PTHR24083">
    <property type="entry name" value="NUCLEAR HORMONE RECEPTOR"/>
    <property type="match status" value="1"/>
</dbReference>
<dbReference type="Pfam" id="PF00104">
    <property type="entry name" value="Hormone_recep"/>
    <property type="match status" value="1"/>
</dbReference>
<dbReference type="Pfam" id="PF11825">
    <property type="entry name" value="Nuc_recep-AF1"/>
    <property type="match status" value="1"/>
</dbReference>
<dbReference type="Pfam" id="PF00105">
    <property type="entry name" value="zf-C4"/>
    <property type="match status" value="1"/>
</dbReference>
<dbReference type="PRINTS" id="PR00545">
    <property type="entry name" value="RETINOIDXR"/>
</dbReference>
<dbReference type="PRINTS" id="PR00398">
    <property type="entry name" value="STRDHORMONER"/>
</dbReference>
<dbReference type="PRINTS" id="PR00047">
    <property type="entry name" value="STROIDFINGER"/>
</dbReference>
<dbReference type="SMART" id="SM00430">
    <property type="entry name" value="HOLI"/>
    <property type="match status" value="1"/>
</dbReference>
<dbReference type="SMART" id="SM00399">
    <property type="entry name" value="ZnF_C4"/>
    <property type="match status" value="1"/>
</dbReference>
<dbReference type="SUPFAM" id="SSF57716">
    <property type="entry name" value="Glucocorticoid receptor-like (DNA-binding domain)"/>
    <property type="match status" value="1"/>
</dbReference>
<dbReference type="SUPFAM" id="SSF48508">
    <property type="entry name" value="Nuclear receptor ligand-binding domain"/>
    <property type="match status" value="1"/>
</dbReference>
<dbReference type="PROSITE" id="PS51843">
    <property type="entry name" value="NR_LBD"/>
    <property type="match status" value="1"/>
</dbReference>
<dbReference type="PROSITE" id="PS00031">
    <property type="entry name" value="NUCLEAR_REC_DBD_1"/>
    <property type="match status" value="1"/>
</dbReference>
<dbReference type="PROSITE" id="PS51030">
    <property type="entry name" value="NUCLEAR_REC_DBD_2"/>
    <property type="match status" value="1"/>
</dbReference>
<comment type="function">
    <text evidence="1">Receptor for retinoic acid. Retinoic acid receptors bind as heterodimers to their target response elements in response to their ligands, all-trans or 9-cis retinoic acid, and regulate gene expression in various biological processes. The rar/rxr heterodimers bind to the retinoic acid response elements (RARE) composed of tandem 5'-AGGTCA-3' sites known as DR1-DR5. The high affinity ligand for rxrs is 9-cis retinoic acid (By similarity).</text>
</comment>
<comment type="subunit">
    <text evidence="1">Homodimer. Heterodimer; with a rar molecule. Binds DNA preferentially as a rar/rxr heterodimer.</text>
</comment>
<comment type="subcellular location">
    <subcellularLocation>
        <location evidence="2">Nucleus</location>
    </subcellularLocation>
</comment>
<comment type="developmental stage">
    <text>It is synthesized during oogenesis and persists in the cleaving embryo at approximately constant levels until it is degraded just before gastrulation.</text>
</comment>
<comment type="domain">
    <text>Composed of three domains: a modulating N-terminal domain, a DNA-binding domain and a C-terminal ligand-binding domain.</text>
</comment>
<comment type="similarity">
    <text evidence="5">Belongs to the nuclear hormone receptor family. NR2 subfamily.</text>
</comment>
<sequence>MHLATETAPSMATYSSTYFNSSLHAHSTSVSSSNLAAMNSLDTHPGYMGNSLNGPRSMTTNMNSMCSPGNNIGLPYRVIASSMGPHSLPSPTILNYPGHESPPFNILNNVSCSEDIKPPPGLSSLGSPCMNNYSCNSPGALTKHICAICGDRSSGKHYGVYSCEGCKGFFKRTIRKDLVYTCRDSKDCLIDKRQRNRCQYCRYQKCLAMGMKREAVQEERQRSREKSDTEAESTSSTSEEMPVERILEAELAVDPKIEAFGDAGLPNSTNDPVTNICHAADKQLFTLVEWAKRIPYFSDLPLEDQVILLRAGWNELLIASFSHRSVSVQDGILLATGLHVHRSSAHNAGVGSIFDRVLTELVSKMKDMDMDKSELGCLRAIVLFNPDAKGLSNAAEVEALREKVYATLESYTKQKYPDQPGRFAKLLLRLPALRSIGLKCLEHLFFFKLIGDTPIDTFLMEMLETPHQIS</sequence>
<feature type="chain" id="PRO_0000053580" description="Retinoic acid receptor RXR-gamma">
    <location>
        <begin position="1"/>
        <end position="470"/>
    </location>
</feature>
<feature type="domain" description="NR LBD" evidence="3">
    <location>
        <begin position="238"/>
        <end position="466"/>
    </location>
</feature>
<feature type="DNA-binding region" description="Nuclear receptor" evidence="2">
    <location>
        <begin position="146"/>
        <end position="211"/>
    </location>
</feature>
<feature type="zinc finger region" description="NR C4-type" evidence="2">
    <location>
        <begin position="146"/>
        <end position="166"/>
    </location>
</feature>
<feature type="zinc finger region" description="NR C4-type" evidence="2">
    <location>
        <begin position="182"/>
        <end position="206"/>
    </location>
</feature>
<feature type="region of interest" description="Modulating" evidence="1">
    <location>
        <begin position="1"/>
        <end position="145"/>
    </location>
</feature>
<feature type="region of interest" description="Hinge">
    <location>
        <begin position="212"/>
        <end position="235"/>
    </location>
</feature>
<feature type="region of interest" description="Disordered" evidence="4">
    <location>
        <begin position="217"/>
        <end position="242"/>
    </location>
</feature>
<feature type="compositionally biased region" description="Basic and acidic residues" evidence="4">
    <location>
        <begin position="217"/>
        <end position="229"/>
    </location>
</feature>
<name>RXRG_XENLA</name>
<proteinExistence type="evidence at transcript level"/>
<gene>
    <name type="primary">rxrg</name>
    <name type="synonym">nr2b3</name>
</gene>